<organism>
    <name type="scientific">Synechococcus sp. (strain WH7803)</name>
    <dbReference type="NCBI Taxonomy" id="32051"/>
    <lineage>
        <taxon>Bacteria</taxon>
        <taxon>Bacillati</taxon>
        <taxon>Cyanobacteriota</taxon>
        <taxon>Cyanophyceae</taxon>
        <taxon>Synechococcales</taxon>
        <taxon>Synechococcaceae</taxon>
        <taxon>Synechococcus</taxon>
    </lineage>
</organism>
<keyword id="KW-0067">ATP-binding</keyword>
<keyword id="KW-0436">Ligase</keyword>
<keyword id="KW-0547">Nucleotide-binding</keyword>
<keyword id="KW-0648">Protein biosynthesis</keyword>
<keyword id="KW-1185">Reference proteome</keyword>
<dbReference type="EC" id="6.3.5.-" evidence="1"/>
<dbReference type="EMBL" id="CT971583">
    <property type="protein sequence ID" value="CAK24811.1"/>
    <property type="molecule type" value="Genomic_DNA"/>
</dbReference>
<dbReference type="SMR" id="A5GPE6"/>
<dbReference type="STRING" id="32051.SynWH7803_2385"/>
<dbReference type="KEGG" id="syx:SynWH7803_2385"/>
<dbReference type="eggNOG" id="COG0064">
    <property type="taxonomic scope" value="Bacteria"/>
</dbReference>
<dbReference type="HOGENOM" id="CLU_019240_0_0_3"/>
<dbReference type="OrthoDB" id="9804078at2"/>
<dbReference type="Proteomes" id="UP000001566">
    <property type="component" value="Chromosome"/>
</dbReference>
<dbReference type="GO" id="GO:0050566">
    <property type="term" value="F:asparaginyl-tRNA synthase (glutamine-hydrolyzing) activity"/>
    <property type="evidence" value="ECO:0007669"/>
    <property type="project" value="RHEA"/>
</dbReference>
<dbReference type="GO" id="GO:0005524">
    <property type="term" value="F:ATP binding"/>
    <property type="evidence" value="ECO:0007669"/>
    <property type="project" value="UniProtKB-KW"/>
</dbReference>
<dbReference type="GO" id="GO:0050567">
    <property type="term" value="F:glutaminyl-tRNA synthase (glutamine-hydrolyzing) activity"/>
    <property type="evidence" value="ECO:0007669"/>
    <property type="project" value="UniProtKB-UniRule"/>
</dbReference>
<dbReference type="GO" id="GO:0070681">
    <property type="term" value="P:glutaminyl-tRNAGln biosynthesis via transamidation"/>
    <property type="evidence" value="ECO:0007669"/>
    <property type="project" value="TreeGrafter"/>
</dbReference>
<dbReference type="GO" id="GO:0006412">
    <property type="term" value="P:translation"/>
    <property type="evidence" value="ECO:0007669"/>
    <property type="project" value="UniProtKB-UniRule"/>
</dbReference>
<dbReference type="FunFam" id="1.10.10.410:FF:000001">
    <property type="entry name" value="Aspartyl/glutamyl-tRNA(Asn/Gln) amidotransferase subunit B"/>
    <property type="match status" value="1"/>
</dbReference>
<dbReference type="FunFam" id="1.10.150.380:FF:000001">
    <property type="entry name" value="Aspartyl/glutamyl-tRNA(Asn/Gln) amidotransferase subunit B"/>
    <property type="match status" value="1"/>
</dbReference>
<dbReference type="Gene3D" id="1.10.10.410">
    <property type="match status" value="1"/>
</dbReference>
<dbReference type="Gene3D" id="1.10.150.380">
    <property type="entry name" value="GatB domain, N-terminal subdomain"/>
    <property type="match status" value="1"/>
</dbReference>
<dbReference type="HAMAP" id="MF_00121">
    <property type="entry name" value="GatB"/>
    <property type="match status" value="1"/>
</dbReference>
<dbReference type="InterPro" id="IPR017959">
    <property type="entry name" value="Asn/Gln-tRNA_amidoTrfase_suB/E"/>
</dbReference>
<dbReference type="InterPro" id="IPR006075">
    <property type="entry name" value="Asn/Gln-tRNA_Trfase_suB/E_cat"/>
</dbReference>
<dbReference type="InterPro" id="IPR018027">
    <property type="entry name" value="Asn/Gln_amidotransferase"/>
</dbReference>
<dbReference type="InterPro" id="IPR003789">
    <property type="entry name" value="Asn/Gln_tRNA_amidoTrase-B-like"/>
</dbReference>
<dbReference type="InterPro" id="IPR004413">
    <property type="entry name" value="GatB"/>
</dbReference>
<dbReference type="InterPro" id="IPR042114">
    <property type="entry name" value="GatB_C_1"/>
</dbReference>
<dbReference type="InterPro" id="IPR023168">
    <property type="entry name" value="GatB_Yqey_C_2"/>
</dbReference>
<dbReference type="InterPro" id="IPR017958">
    <property type="entry name" value="Gln-tRNA_amidoTrfase_suB_CS"/>
</dbReference>
<dbReference type="InterPro" id="IPR014746">
    <property type="entry name" value="Gln_synth/guanido_kin_cat_dom"/>
</dbReference>
<dbReference type="NCBIfam" id="TIGR00133">
    <property type="entry name" value="gatB"/>
    <property type="match status" value="1"/>
</dbReference>
<dbReference type="NCBIfam" id="NF004012">
    <property type="entry name" value="PRK05477.1-2"/>
    <property type="match status" value="1"/>
</dbReference>
<dbReference type="NCBIfam" id="NF004014">
    <property type="entry name" value="PRK05477.1-4"/>
    <property type="match status" value="1"/>
</dbReference>
<dbReference type="PANTHER" id="PTHR11659">
    <property type="entry name" value="GLUTAMYL-TRNA GLN AMIDOTRANSFERASE SUBUNIT B MITOCHONDRIAL AND PROKARYOTIC PET112-RELATED"/>
    <property type="match status" value="1"/>
</dbReference>
<dbReference type="PANTHER" id="PTHR11659:SF0">
    <property type="entry name" value="GLUTAMYL-TRNA(GLN) AMIDOTRANSFERASE SUBUNIT B, MITOCHONDRIAL"/>
    <property type="match status" value="1"/>
</dbReference>
<dbReference type="Pfam" id="PF02934">
    <property type="entry name" value="GatB_N"/>
    <property type="match status" value="1"/>
</dbReference>
<dbReference type="Pfam" id="PF02637">
    <property type="entry name" value="GatB_Yqey"/>
    <property type="match status" value="1"/>
</dbReference>
<dbReference type="SMART" id="SM00845">
    <property type="entry name" value="GatB_Yqey"/>
    <property type="match status" value="1"/>
</dbReference>
<dbReference type="SUPFAM" id="SSF89095">
    <property type="entry name" value="GatB/YqeY motif"/>
    <property type="match status" value="1"/>
</dbReference>
<dbReference type="SUPFAM" id="SSF55931">
    <property type="entry name" value="Glutamine synthetase/guanido kinase"/>
    <property type="match status" value="1"/>
</dbReference>
<dbReference type="PROSITE" id="PS01234">
    <property type="entry name" value="GATB"/>
    <property type="match status" value="1"/>
</dbReference>
<proteinExistence type="inferred from homology"/>
<gene>
    <name evidence="1" type="primary">gatB</name>
    <name type="ordered locus">SynWH7803_2385</name>
</gene>
<name>GATB_SYNPW</name>
<reference key="1">
    <citation type="submission" date="2006-05" db="EMBL/GenBank/DDBJ databases">
        <authorList>
            <consortium name="Genoscope"/>
        </authorList>
    </citation>
    <scope>NUCLEOTIDE SEQUENCE [LARGE SCALE GENOMIC DNA]</scope>
    <source>
        <strain>WH7803</strain>
    </source>
</reference>
<evidence type="ECO:0000255" key="1">
    <source>
        <dbReference type="HAMAP-Rule" id="MF_00121"/>
    </source>
</evidence>
<comment type="function">
    <text evidence="1">Allows the formation of correctly charged Asn-tRNA(Asn) or Gln-tRNA(Gln) through the transamidation of misacylated Asp-tRNA(Asn) or Glu-tRNA(Gln) in organisms which lack either or both of asparaginyl-tRNA or glutaminyl-tRNA synthetases. The reaction takes place in the presence of glutamine and ATP through an activated phospho-Asp-tRNA(Asn) or phospho-Glu-tRNA(Gln).</text>
</comment>
<comment type="catalytic activity">
    <reaction evidence="1">
        <text>L-glutamyl-tRNA(Gln) + L-glutamine + ATP + H2O = L-glutaminyl-tRNA(Gln) + L-glutamate + ADP + phosphate + H(+)</text>
        <dbReference type="Rhea" id="RHEA:17521"/>
        <dbReference type="Rhea" id="RHEA-COMP:9681"/>
        <dbReference type="Rhea" id="RHEA-COMP:9684"/>
        <dbReference type="ChEBI" id="CHEBI:15377"/>
        <dbReference type="ChEBI" id="CHEBI:15378"/>
        <dbReference type="ChEBI" id="CHEBI:29985"/>
        <dbReference type="ChEBI" id="CHEBI:30616"/>
        <dbReference type="ChEBI" id="CHEBI:43474"/>
        <dbReference type="ChEBI" id="CHEBI:58359"/>
        <dbReference type="ChEBI" id="CHEBI:78520"/>
        <dbReference type="ChEBI" id="CHEBI:78521"/>
        <dbReference type="ChEBI" id="CHEBI:456216"/>
    </reaction>
</comment>
<comment type="catalytic activity">
    <reaction evidence="1">
        <text>L-aspartyl-tRNA(Asn) + L-glutamine + ATP + H2O = L-asparaginyl-tRNA(Asn) + L-glutamate + ADP + phosphate + 2 H(+)</text>
        <dbReference type="Rhea" id="RHEA:14513"/>
        <dbReference type="Rhea" id="RHEA-COMP:9674"/>
        <dbReference type="Rhea" id="RHEA-COMP:9677"/>
        <dbReference type="ChEBI" id="CHEBI:15377"/>
        <dbReference type="ChEBI" id="CHEBI:15378"/>
        <dbReference type="ChEBI" id="CHEBI:29985"/>
        <dbReference type="ChEBI" id="CHEBI:30616"/>
        <dbReference type="ChEBI" id="CHEBI:43474"/>
        <dbReference type="ChEBI" id="CHEBI:58359"/>
        <dbReference type="ChEBI" id="CHEBI:78515"/>
        <dbReference type="ChEBI" id="CHEBI:78516"/>
        <dbReference type="ChEBI" id="CHEBI:456216"/>
    </reaction>
</comment>
<comment type="subunit">
    <text evidence="1">Heterotrimer of A, B and C subunits.</text>
</comment>
<comment type="similarity">
    <text evidence="1">Belongs to the GatB/GatE family. GatB subfamily.</text>
</comment>
<sequence length="494" mass="54229">MAAPAATDQAWEAVIGLETHVQLGTNSKIFTAASTAFGDDPNTHIDPVVCGLPGTLPVLNQKVLEYAVKAAMALNLNIAEHSKFDRKQYFYPDLPKNYQISQYDEPIAEDGWIEVEVAEKGKDTYLKTIGIERLHMEEDAGKLVHAGSDRLAGSTHSLVDYNRAGVALAEIVSKPDLRTGREAAEYASEIRRIMRYLGVSDGNMQEGSLRCDVNISVRRGPEAPFGTKVEIKNMNSFSAIQKACEYEIQRQIKAYEAGEPIVQETRLWDESKQLTKSMRSKEGASDYRYFPDPDLGPIEVSADQRDSWRAELPELPAAKRHRYADTLGLSQYDARVLTDEKPMADYFEAVVVAGADAKLAANWITGDIAAYVNSNRLSYANLPFRPEQLAEMVQLIDGGKISGKIAKEILPELLENGGSPKAIVDERGLGMISDPAAIEAIVDELLGAHPDEVEAFRGGKTKLQGFFVGQLMKKTGGKADPKLANQILSKKLKG</sequence>
<protein>
    <recommendedName>
        <fullName evidence="1">Aspartyl/glutamyl-tRNA(Asn/Gln) amidotransferase subunit B</fullName>
        <shortName evidence="1">Asp/Glu-ADT subunit B</shortName>
        <ecNumber evidence="1">6.3.5.-</ecNumber>
    </recommendedName>
</protein>
<feature type="chain" id="PRO_1000016054" description="Aspartyl/glutamyl-tRNA(Asn/Gln) amidotransferase subunit B">
    <location>
        <begin position="1"/>
        <end position="494"/>
    </location>
</feature>
<accession>A5GPE6</accession>